<organism>
    <name type="scientific">Shewanella pealeana (strain ATCC 700345 / ANG-SQ1)</name>
    <dbReference type="NCBI Taxonomy" id="398579"/>
    <lineage>
        <taxon>Bacteria</taxon>
        <taxon>Pseudomonadati</taxon>
        <taxon>Pseudomonadota</taxon>
        <taxon>Gammaproteobacteria</taxon>
        <taxon>Alteromonadales</taxon>
        <taxon>Shewanellaceae</taxon>
        <taxon>Shewanella</taxon>
    </lineage>
</organism>
<comment type="catalytic activity">
    <reaction evidence="1">
        <text>uridine + ATP = UMP + ADP + H(+)</text>
        <dbReference type="Rhea" id="RHEA:16825"/>
        <dbReference type="ChEBI" id="CHEBI:15378"/>
        <dbReference type="ChEBI" id="CHEBI:16704"/>
        <dbReference type="ChEBI" id="CHEBI:30616"/>
        <dbReference type="ChEBI" id="CHEBI:57865"/>
        <dbReference type="ChEBI" id="CHEBI:456216"/>
        <dbReference type="EC" id="2.7.1.48"/>
    </reaction>
</comment>
<comment type="catalytic activity">
    <reaction evidence="1">
        <text>cytidine + ATP = CMP + ADP + H(+)</text>
        <dbReference type="Rhea" id="RHEA:24674"/>
        <dbReference type="ChEBI" id="CHEBI:15378"/>
        <dbReference type="ChEBI" id="CHEBI:17562"/>
        <dbReference type="ChEBI" id="CHEBI:30616"/>
        <dbReference type="ChEBI" id="CHEBI:60377"/>
        <dbReference type="ChEBI" id="CHEBI:456216"/>
        <dbReference type="EC" id="2.7.1.48"/>
    </reaction>
</comment>
<comment type="pathway">
    <text evidence="1">Pyrimidine metabolism; CTP biosynthesis via salvage pathway; CTP from cytidine: step 1/3.</text>
</comment>
<comment type="pathway">
    <text evidence="1">Pyrimidine metabolism; UMP biosynthesis via salvage pathway; UMP from uridine: step 1/1.</text>
</comment>
<comment type="subcellular location">
    <subcellularLocation>
        <location evidence="1">Cytoplasm</location>
    </subcellularLocation>
</comment>
<comment type="similarity">
    <text evidence="1">Belongs to the uridine kinase family.</text>
</comment>
<name>URK_SHEPA</name>
<feature type="chain" id="PRO_1000081972" description="Uridine kinase">
    <location>
        <begin position="1"/>
        <end position="211"/>
    </location>
</feature>
<feature type="binding site" evidence="1">
    <location>
        <begin position="13"/>
        <end position="20"/>
    </location>
    <ligand>
        <name>ATP</name>
        <dbReference type="ChEBI" id="CHEBI:30616"/>
    </ligand>
</feature>
<sequence length="211" mass="23769">MNSKDCVVIGIAGASASGKSLIAKTIYEELCRDLGTDQIGVIAEDAYYRDQGHLSMDQRVLTNYDHPKALDHELLCSHLRELKAGNAVDIPVYSYTEHTRTDEKVTLTPKKVIILEGILLLTDPALRKEMDASVFMDTPLDICFMRRLSRDVAERGRTMQSVMSQYTETVRPMFLQFIEPSKQYADIIVPRGGKNRIATDILKARIQHLLA</sequence>
<protein>
    <recommendedName>
        <fullName evidence="1">Uridine kinase</fullName>
        <ecNumber evidence="1">2.7.1.48</ecNumber>
    </recommendedName>
    <alternativeName>
        <fullName evidence="1">Cytidine monophosphokinase</fullName>
    </alternativeName>
    <alternativeName>
        <fullName evidence="1">Uridine monophosphokinase</fullName>
    </alternativeName>
</protein>
<reference key="1">
    <citation type="submission" date="2007-10" db="EMBL/GenBank/DDBJ databases">
        <title>Complete sequence of Shewanella pealeana ATCC 700345.</title>
        <authorList>
            <consortium name="US DOE Joint Genome Institute"/>
            <person name="Copeland A."/>
            <person name="Lucas S."/>
            <person name="Lapidus A."/>
            <person name="Barry K."/>
            <person name="Glavina del Rio T."/>
            <person name="Dalin E."/>
            <person name="Tice H."/>
            <person name="Pitluck S."/>
            <person name="Chertkov O."/>
            <person name="Brettin T."/>
            <person name="Bruce D."/>
            <person name="Detter J.C."/>
            <person name="Han C."/>
            <person name="Schmutz J."/>
            <person name="Larimer F."/>
            <person name="Land M."/>
            <person name="Hauser L."/>
            <person name="Kyrpides N."/>
            <person name="Kim E."/>
            <person name="Zhao J.-S.Z."/>
            <person name="Manno D."/>
            <person name="Hawari J."/>
            <person name="Richardson P."/>
        </authorList>
    </citation>
    <scope>NUCLEOTIDE SEQUENCE [LARGE SCALE GENOMIC DNA]</scope>
    <source>
        <strain>ATCC 700345 / ANG-SQ1</strain>
    </source>
</reference>
<evidence type="ECO:0000255" key="1">
    <source>
        <dbReference type="HAMAP-Rule" id="MF_00551"/>
    </source>
</evidence>
<dbReference type="EC" id="2.7.1.48" evidence="1"/>
<dbReference type="EMBL" id="CP000851">
    <property type="protein sequence ID" value="ABV87241.1"/>
    <property type="molecule type" value="Genomic_DNA"/>
</dbReference>
<dbReference type="RefSeq" id="WP_012155159.1">
    <property type="nucleotide sequence ID" value="NC_009901.1"/>
</dbReference>
<dbReference type="SMR" id="A8H3V4"/>
<dbReference type="STRING" id="398579.Spea_1919"/>
<dbReference type="KEGG" id="spl:Spea_1919"/>
<dbReference type="eggNOG" id="COG0572">
    <property type="taxonomic scope" value="Bacteria"/>
</dbReference>
<dbReference type="HOGENOM" id="CLU_021278_1_2_6"/>
<dbReference type="OrthoDB" id="9777642at2"/>
<dbReference type="UniPathway" id="UPA00574">
    <property type="reaction ID" value="UER00637"/>
</dbReference>
<dbReference type="UniPathway" id="UPA00579">
    <property type="reaction ID" value="UER00640"/>
</dbReference>
<dbReference type="Proteomes" id="UP000002608">
    <property type="component" value="Chromosome"/>
</dbReference>
<dbReference type="GO" id="GO:0005737">
    <property type="term" value="C:cytoplasm"/>
    <property type="evidence" value="ECO:0007669"/>
    <property type="project" value="UniProtKB-SubCell"/>
</dbReference>
<dbReference type="GO" id="GO:0005524">
    <property type="term" value="F:ATP binding"/>
    <property type="evidence" value="ECO:0007669"/>
    <property type="project" value="UniProtKB-UniRule"/>
</dbReference>
<dbReference type="GO" id="GO:0043771">
    <property type="term" value="F:cytidine kinase activity"/>
    <property type="evidence" value="ECO:0007669"/>
    <property type="project" value="RHEA"/>
</dbReference>
<dbReference type="GO" id="GO:0004849">
    <property type="term" value="F:uridine kinase activity"/>
    <property type="evidence" value="ECO:0007669"/>
    <property type="project" value="UniProtKB-UniRule"/>
</dbReference>
<dbReference type="GO" id="GO:0044211">
    <property type="term" value="P:CTP salvage"/>
    <property type="evidence" value="ECO:0007669"/>
    <property type="project" value="UniProtKB-UniRule"/>
</dbReference>
<dbReference type="GO" id="GO:0044206">
    <property type="term" value="P:UMP salvage"/>
    <property type="evidence" value="ECO:0007669"/>
    <property type="project" value="UniProtKB-UniRule"/>
</dbReference>
<dbReference type="CDD" id="cd02023">
    <property type="entry name" value="UMPK"/>
    <property type="match status" value="1"/>
</dbReference>
<dbReference type="Gene3D" id="3.40.50.300">
    <property type="entry name" value="P-loop containing nucleotide triphosphate hydrolases"/>
    <property type="match status" value="1"/>
</dbReference>
<dbReference type="HAMAP" id="MF_00551">
    <property type="entry name" value="Uridine_kinase"/>
    <property type="match status" value="1"/>
</dbReference>
<dbReference type="InterPro" id="IPR027417">
    <property type="entry name" value="P-loop_NTPase"/>
</dbReference>
<dbReference type="InterPro" id="IPR006083">
    <property type="entry name" value="PRK/URK"/>
</dbReference>
<dbReference type="InterPro" id="IPR026008">
    <property type="entry name" value="Uridine_kinase"/>
</dbReference>
<dbReference type="InterPro" id="IPR000764">
    <property type="entry name" value="Uridine_kinase-like"/>
</dbReference>
<dbReference type="NCBIfam" id="NF004018">
    <property type="entry name" value="PRK05480.1"/>
    <property type="match status" value="1"/>
</dbReference>
<dbReference type="NCBIfam" id="TIGR00235">
    <property type="entry name" value="udk"/>
    <property type="match status" value="1"/>
</dbReference>
<dbReference type="PANTHER" id="PTHR10285">
    <property type="entry name" value="URIDINE KINASE"/>
    <property type="match status" value="1"/>
</dbReference>
<dbReference type="Pfam" id="PF00485">
    <property type="entry name" value="PRK"/>
    <property type="match status" value="1"/>
</dbReference>
<dbReference type="PRINTS" id="PR00988">
    <property type="entry name" value="URIDINKINASE"/>
</dbReference>
<dbReference type="SUPFAM" id="SSF52540">
    <property type="entry name" value="P-loop containing nucleoside triphosphate hydrolases"/>
    <property type="match status" value="1"/>
</dbReference>
<gene>
    <name evidence="1" type="primary">udk</name>
    <name type="ordered locus">Spea_1919</name>
</gene>
<accession>A8H3V4</accession>
<keyword id="KW-0067">ATP-binding</keyword>
<keyword id="KW-0963">Cytoplasm</keyword>
<keyword id="KW-0418">Kinase</keyword>
<keyword id="KW-0547">Nucleotide-binding</keyword>
<keyword id="KW-1185">Reference proteome</keyword>
<keyword id="KW-0808">Transferase</keyword>
<proteinExistence type="inferred from homology"/>